<comment type="function">
    <text evidence="1">Does not possess a ribonucleotide reductase activity. Betaherpesviruses probably use another strategy to expand the dNTP pool in a quiescent host cell.</text>
</comment>
<comment type="subcellular location">
    <subcellularLocation>
        <location evidence="1">Virion</location>
    </subcellularLocation>
    <subcellularLocation>
        <location evidence="1">Host cytoplasm</location>
    </subcellularLocation>
</comment>
<comment type="similarity">
    <text evidence="1">Belongs to the ribonucleoside diphosphate reductase large chain family.</text>
</comment>
<comment type="caution">
    <text evidence="1">Lacks the conserved sequence Asn-x-Cys-x-Glu essential for ribonucleotide reductase activity.</text>
</comment>
<comment type="sequence caution" evidence="2">
    <conflict type="erroneous initiation">
        <sequence resource="EMBL-CDS" id="AAA16736"/>
    </conflict>
    <text>Extended N-terminus.</text>
</comment>
<name>RIR1_HHV6U</name>
<gene>
    <name evidence="1" type="primary">RIR1</name>
    <name type="synonym">P2LF2</name>
    <name type="synonym">U28</name>
</gene>
<organismHost>
    <name type="scientific">Homo sapiens</name>
    <name type="common">Human</name>
    <dbReference type="NCBI Taxonomy" id="9606"/>
</organismHost>
<protein>
    <recommendedName>
        <fullName evidence="1">Ribonucleoside-diphosphate reductase large subunit-like protein</fullName>
    </recommendedName>
</protein>
<keyword id="KW-1035">Host cytoplasm</keyword>
<keyword id="KW-0426">Late protein</keyword>
<keyword id="KW-1185">Reference proteome</keyword>
<keyword id="KW-0946">Virion</keyword>
<reference key="1">
    <citation type="journal article" date="1994" name="J. Virol.">
        <title>Nucleotide sequence analysis of a 38.5-kilobase-pair region of the genome of human herpesvirus 6 encoding human cytomegalovirus immediate-early gene homologs and transactivating functions.</title>
        <authorList>
            <person name="Nicholas J."/>
            <person name="Martin M.E.D."/>
        </authorList>
    </citation>
    <scope>NUCLEOTIDE SEQUENCE [GENOMIC DNA]</scope>
</reference>
<reference key="2">
    <citation type="journal article" date="1995" name="Virology">
        <title>The DNA sequence of human herpesvirus-6: structure, coding content, and genome evolution.</title>
        <authorList>
            <person name="Gompels U.A."/>
            <person name="Nicholas J."/>
            <person name="Lawrence G.L."/>
            <person name="Jones M."/>
            <person name="Thomson B.J."/>
            <person name="Martin M.E.D."/>
            <person name="Efstathiou S."/>
            <person name="Craxton M.A."/>
            <person name="Macaulay H.A."/>
        </authorList>
    </citation>
    <scope>NUCLEOTIDE SEQUENCE [LARGE SCALE GENOMIC DNA]</scope>
</reference>
<reference key="3">
    <citation type="journal article" date="1999" name="J. Gen. Virol.">
        <title>The U28 ORF of human herpesvirus-7 does not encode a functional ribonucleotide reductase R1 subunit.</title>
        <authorList>
            <person name="Sun Y."/>
            <person name="Conner J."/>
        </authorList>
    </citation>
    <scope>ABSENCE OF RIBONUCLEOTIDE REDUCTASE ACTIVITY</scope>
    <scope>ABSENCE OF GENE FOR SMALL SUBUNIT</scope>
</reference>
<reference key="4">
    <citation type="journal article" date="2009" name="Trends Biochem. Sci.">
        <title>Tinkering with a viral ribonucleotide reductase.</title>
        <authorList>
            <person name="Lembo D."/>
            <person name="Brune W."/>
        </authorList>
    </citation>
    <scope>REVIEW</scope>
</reference>
<accession>P52343</accession>
<accession>Q89941</accession>
<proteinExistence type="evidence at protein level"/>
<evidence type="ECO:0000255" key="1">
    <source>
        <dbReference type="HAMAP-Rule" id="MF_04027"/>
    </source>
</evidence>
<evidence type="ECO:0000305" key="2"/>
<sequence>MKRKERRINKDYGYNRKCVCHYEASQKRFCYSQYSCASVLYERVRDIAKIIDRLDSGLDAWCLRDAIISVLRATHCVPRVDRMLGRWYLKTSVFYDFCPDDLILSCPNVIMPNVLNFVKKYRDFIRSVLYKVSVSWKNQYMPGVLAASRFLEEISNSLNGVEESIPCIYLRMCATLTEIVLRIGYLREIYQENPYVMFEELAFSLFTQKWVLPFSCMTNLGLVEKANSTVFDVAIYNTCLYSLVDFTIVNGEHLFPALLNGSNISMNLTRYQQEAKNIFEILLSQIRVVERDTDKTVQLTVYVEVWHVSALMWLDLYEALPQTSRVTFCLIIPGIFMDRYELKRAQWSLFHKNIAFELGKCDEITFSTKYLEFERTTDHAKITMSSFIEKICLCLKGGRMGLIFRKNVYQYSMIPHVPLYCGGDFLDVLPVRDGINTCMRMLLNVVHFLGDEVSDELTEEIDFVRLQCKFFMFNELRRVVRKMVLVANAVIDYAVENKDFLCEGIEDGRSLGICVTGLHSVFMTVGLSYAHPDARRLYRMICEHIYYTCVRTSVDCCMKGAEPCNLFDRSKYALGMLYFDHFDNVECTLPEELWTTLRKDVLMHGVRNIHFTAGTAMQKEFDIINSSESFWPMEDNKILRRSNIKVVIGKDGLNDVTSVYSSELKSLYIPVYNNLLLNRFNKHQQYLKTVGYRVLNVDTNLFTDKELDDLAVFKDGFSYHLNDLIEMYKSGLPFLDQGQANVFYFNDTVSLRLLLPLLYKAGFKVAMYKVLCNSEMYKHLDLSNPLPLIGKCSDGVVMHVKNIL</sequence>
<feature type="chain" id="PRO_0000187238" description="Ribonucleoside-diphosphate reductase large subunit-like protein">
    <location>
        <begin position="1"/>
        <end position="804"/>
    </location>
</feature>
<dbReference type="EMBL" id="L25528">
    <property type="protein sequence ID" value="AAA16736.1"/>
    <property type="status" value="ALT_INIT"/>
    <property type="molecule type" value="Genomic_DNA"/>
</dbReference>
<dbReference type="EMBL" id="X83413">
    <property type="protein sequence ID" value="CAA58408.1"/>
    <property type="molecule type" value="Genomic_DNA"/>
</dbReference>
<dbReference type="PIR" id="T09323">
    <property type="entry name" value="T09323"/>
</dbReference>
<dbReference type="RefSeq" id="NP_042921.1">
    <property type="nucleotide sequence ID" value="NC_001664.2"/>
</dbReference>
<dbReference type="SMR" id="P52343"/>
<dbReference type="DNASU" id="1487905"/>
<dbReference type="GeneID" id="1487905"/>
<dbReference type="KEGG" id="vg:1487905"/>
<dbReference type="Proteomes" id="UP000009295">
    <property type="component" value="Segment"/>
</dbReference>
<dbReference type="GO" id="GO:0030430">
    <property type="term" value="C:host cell cytoplasm"/>
    <property type="evidence" value="ECO:0007669"/>
    <property type="project" value="UniProtKB-SubCell"/>
</dbReference>
<dbReference type="GO" id="GO:0044423">
    <property type="term" value="C:virion component"/>
    <property type="evidence" value="ECO:0007669"/>
    <property type="project" value="UniProtKB-UniRule"/>
</dbReference>
<dbReference type="GO" id="GO:0005524">
    <property type="term" value="F:ATP binding"/>
    <property type="evidence" value="ECO:0007669"/>
    <property type="project" value="TreeGrafter"/>
</dbReference>
<dbReference type="GO" id="GO:0004748">
    <property type="term" value="F:ribonucleoside-diphosphate reductase activity, thioredoxin disulfide as acceptor"/>
    <property type="evidence" value="ECO:0007669"/>
    <property type="project" value="TreeGrafter"/>
</dbReference>
<dbReference type="GO" id="GO:0009263">
    <property type="term" value="P:deoxyribonucleotide biosynthetic process"/>
    <property type="evidence" value="ECO:0007669"/>
    <property type="project" value="TreeGrafter"/>
</dbReference>
<dbReference type="Gene3D" id="3.20.70.20">
    <property type="match status" value="1"/>
</dbReference>
<dbReference type="HAMAP" id="MF_04027">
    <property type="entry name" value="HSV_RIR1_betahv"/>
    <property type="match status" value="1"/>
</dbReference>
<dbReference type="InterPro" id="IPR034716">
    <property type="entry name" value="HSV_RIR1_betahv"/>
</dbReference>
<dbReference type="InterPro" id="IPR013346">
    <property type="entry name" value="NrdE_NrdA_C"/>
</dbReference>
<dbReference type="InterPro" id="IPR000788">
    <property type="entry name" value="RNR_lg_C"/>
</dbReference>
<dbReference type="InterPro" id="IPR039718">
    <property type="entry name" value="Rrm1"/>
</dbReference>
<dbReference type="PANTHER" id="PTHR11573">
    <property type="entry name" value="RIBONUCLEOSIDE-DIPHOSPHATE REDUCTASE LARGE CHAIN"/>
    <property type="match status" value="1"/>
</dbReference>
<dbReference type="PANTHER" id="PTHR11573:SF6">
    <property type="entry name" value="RIBONUCLEOSIDE-DIPHOSPHATE REDUCTASE LARGE SUBUNIT"/>
    <property type="match status" value="1"/>
</dbReference>
<dbReference type="Pfam" id="PF02867">
    <property type="entry name" value="Ribonuc_red_lgC"/>
    <property type="match status" value="1"/>
</dbReference>
<dbReference type="PRINTS" id="PR01183">
    <property type="entry name" value="RIBORDTASEM1"/>
</dbReference>
<dbReference type="SUPFAM" id="SSF51998">
    <property type="entry name" value="PFL-like glycyl radical enzymes"/>
    <property type="match status" value="1"/>
</dbReference>
<dbReference type="PROSITE" id="PS00089">
    <property type="entry name" value="RIBORED_LARGE"/>
    <property type="match status" value="1"/>
</dbReference>
<organism>
    <name type="scientific">Human herpesvirus 6A (strain Uganda-1102)</name>
    <name type="common">HHV-6 variant A</name>
    <name type="synonym">Human B lymphotropic virus</name>
    <dbReference type="NCBI Taxonomy" id="10370"/>
    <lineage>
        <taxon>Viruses</taxon>
        <taxon>Duplodnaviria</taxon>
        <taxon>Heunggongvirae</taxon>
        <taxon>Peploviricota</taxon>
        <taxon>Herviviricetes</taxon>
        <taxon>Herpesvirales</taxon>
        <taxon>Orthoherpesviridae</taxon>
        <taxon>Betaherpesvirinae</taxon>
        <taxon>Roseolovirus</taxon>
        <taxon>Roseolovirus humanbeta6a</taxon>
        <taxon>Human betaherpesvirus 6A</taxon>
    </lineage>
</organism>